<name>RL331_STAAR</name>
<reference key="1">
    <citation type="journal article" date="2004" name="Proc. Natl. Acad. Sci. U.S.A.">
        <title>Complete genomes of two clinical Staphylococcus aureus strains: evidence for the rapid evolution of virulence and drug resistance.</title>
        <authorList>
            <person name="Holden M.T.G."/>
            <person name="Feil E.J."/>
            <person name="Lindsay J.A."/>
            <person name="Peacock S.J."/>
            <person name="Day N.P.J."/>
            <person name="Enright M.C."/>
            <person name="Foster T.J."/>
            <person name="Moore C.E."/>
            <person name="Hurst L."/>
            <person name="Atkin R."/>
            <person name="Barron A."/>
            <person name="Bason N."/>
            <person name="Bentley S.D."/>
            <person name="Chillingworth C."/>
            <person name="Chillingworth T."/>
            <person name="Churcher C."/>
            <person name="Clark L."/>
            <person name="Corton C."/>
            <person name="Cronin A."/>
            <person name="Doggett J."/>
            <person name="Dowd L."/>
            <person name="Feltwell T."/>
            <person name="Hance Z."/>
            <person name="Harris B."/>
            <person name="Hauser H."/>
            <person name="Holroyd S."/>
            <person name="Jagels K."/>
            <person name="James K.D."/>
            <person name="Lennard N."/>
            <person name="Line A."/>
            <person name="Mayes R."/>
            <person name="Moule S."/>
            <person name="Mungall K."/>
            <person name="Ormond D."/>
            <person name="Quail M.A."/>
            <person name="Rabbinowitsch E."/>
            <person name="Rutherford K.M."/>
            <person name="Sanders M."/>
            <person name="Sharp S."/>
            <person name="Simmonds M."/>
            <person name="Stevens K."/>
            <person name="Whitehead S."/>
            <person name="Barrell B.G."/>
            <person name="Spratt B.G."/>
            <person name="Parkhill J."/>
        </authorList>
    </citation>
    <scope>NUCLEOTIDE SEQUENCE [LARGE SCALE GENOMIC DNA]</scope>
    <source>
        <strain>MRSA252</strain>
    </source>
</reference>
<dbReference type="EMBL" id="BX571856">
    <property type="protein sequence ID" value="CAG40623.1"/>
    <property type="molecule type" value="Genomic_DNA"/>
</dbReference>
<dbReference type="SMR" id="Q6GGE8"/>
<dbReference type="KEGG" id="sar:SAR1628"/>
<dbReference type="HOGENOM" id="CLU_190949_0_2_9"/>
<dbReference type="Proteomes" id="UP000000596">
    <property type="component" value="Chromosome"/>
</dbReference>
<dbReference type="GO" id="GO:0005737">
    <property type="term" value="C:cytoplasm"/>
    <property type="evidence" value="ECO:0007669"/>
    <property type="project" value="UniProtKB-ARBA"/>
</dbReference>
<dbReference type="GO" id="GO:1990904">
    <property type="term" value="C:ribonucleoprotein complex"/>
    <property type="evidence" value="ECO:0007669"/>
    <property type="project" value="UniProtKB-KW"/>
</dbReference>
<dbReference type="GO" id="GO:0005840">
    <property type="term" value="C:ribosome"/>
    <property type="evidence" value="ECO:0007669"/>
    <property type="project" value="UniProtKB-KW"/>
</dbReference>
<dbReference type="GO" id="GO:0003735">
    <property type="term" value="F:structural constituent of ribosome"/>
    <property type="evidence" value="ECO:0007669"/>
    <property type="project" value="InterPro"/>
</dbReference>
<dbReference type="GO" id="GO:0006412">
    <property type="term" value="P:translation"/>
    <property type="evidence" value="ECO:0007669"/>
    <property type="project" value="UniProtKB-UniRule"/>
</dbReference>
<dbReference type="Gene3D" id="2.20.28.120">
    <property type="entry name" value="Ribosomal protein L33"/>
    <property type="match status" value="1"/>
</dbReference>
<dbReference type="HAMAP" id="MF_00294">
    <property type="entry name" value="Ribosomal_bL33"/>
    <property type="match status" value="1"/>
</dbReference>
<dbReference type="InterPro" id="IPR001705">
    <property type="entry name" value="Ribosomal_bL33"/>
</dbReference>
<dbReference type="InterPro" id="IPR018264">
    <property type="entry name" value="Ribosomal_bL33_CS"/>
</dbReference>
<dbReference type="InterPro" id="IPR038584">
    <property type="entry name" value="Ribosomal_bL33_sf"/>
</dbReference>
<dbReference type="InterPro" id="IPR011332">
    <property type="entry name" value="Ribosomal_zn-bd"/>
</dbReference>
<dbReference type="NCBIfam" id="NF001764">
    <property type="entry name" value="PRK00504.1"/>
    <property type="match status" value="1"/>
</dbReference>
<dbReference type="NCBIfam" id="NF001860">
    <property type="entry name" value="PRK00595.1"/>
    <property type="match status" value="1"/>
</dbReference>
<dbReference type="NCBIfam" id="TIGR01023">
    <property type="entry name" value="rpmG_bact"/>
    <property type="match status" value="1"/>
</dbReference>
<dbReference type="PANTHER" id="PTHR43168">
    <property type="entry name" value="50S RIBOSOMAL PROTEIN L33, CHLOROPLASTIC"/>
    <property type="match status" value="1"/>
</dbReference>
<dbReference type="PANTHER" id="PTHR43168:SF2">
    <property type="entry name" value="LARGE RIBOSOMAL SUBUNIT PROTEIN BL33C"/>
    <property type="match status" value="1"/>
</dbReference>
<dbReference type="Pfam" id="PF00471">
    <property type="entry name" value="Ribosomal_L33"/>
    <property type="match status" value="1"/>
</dbReference>
<dbReference type="SUPFAM" id="SSF57829">
    <property type="entry name" value="Zn-binding ribosomal proteins"/>
    <property type="match status" value="1"/>
</dbReference>
<dbReference type="PROSITE" id="PS00582">
    <property type="entry name" value="RIBOSOMAL_L33"/>
    <property type="match status" value="1"/>
</dbReference>
<gene>
    <name evidence="1" type="primary">rpmG1</name>
    <name type="ordered locus">SAR1628</name>
</gene>
<accession>Q6GGE8</accession>
<evidence type="ECO:0000255" key="1">
    <source>
        <dbReference type="HAMAP-Rule" id="MF_00294"/>
    </source>
</evidence>
<organism>
    <name type="scientific">Staphylococcus aureus (strain MRSA252)</name>
    <dbReference type="NCBI Taxonomy" id="282458"/>
    <lineage>
        <taxon>Bacteria</taxon>
        <taxon>Bacillati</taxon>
        <taxon>Bacillota</taxon>
        <taxon>Bacilli</taxon>
        <taxon>Bacillales</taxon>
        <taxon>Staphylococcaceae</taxon>
        <taxon>Staphylococcus</taxon>
    </lineage>
</organism>
<proteinExistence type="inferred from homology"/>
<comment type="similarity">
    <text evidence="1">Belongs to the bacterial ribosomal protein bL33 family.</text>
</comment>
<feature type="chain" id="PRO_0000170219" description="Large ribosomal subunit protein bL33A">
    <location>
        <begin position="1"/>
        <end position="49"/>
    </location>
</feature>
<sequence>MRVNVTLACTECGDRNYITTKNKRNNPERVEMKKFCSRENKQTLHRETK</sequence>
<protein>
    <recommendedName>
        <fullName evidence="1">Large ribosomal subunit protein bL33A</fullName>
    </recommendedName>
    <alternativeName>
        <fullName evidence="1">50S ribosomal protein L33 1</fullName>
    </alternativeName>
</protein>
<keyword id="KW-0687">Ribonucleoprotein</keyword>
<keyword id="KW-0689">Ribosomal protein</keyword>